<dbReference type="EMBL" id="AE004437">
    <property type="protein sequence ID" value="AAG19949.1"/>
    <property type="molecule type" value="Genomic_DNA"/>
</dbReference>
<dbReference type="PIR" id="A84323">
    <property type="entry name" value="A84323"/>
</dbReference>
<dbReference type="PIR" id="S08569">
    <property type="entry name" value="S08569"/>
</dbReference>
<dbReference type="RefSeq" id="WP_010903247.1">
    <property type="nucleotide sequence ID" value="NC_002607.1"/>
</dbReference>
<dbReference type="SMR" id="P50558"/>
<dbReference type="FunCoup" id="P50558">
    <property type="interactions" value="126"/>
</dbReference>
<dbReference type="STRING" id="64091.VNG_1705G"/>
<dbReference type="PaxDb" id="64091-VNG_1705G"/>
<dbReference type="KEGG" id="hal:VNG_1705G"/>
<dbReference type="PATRIC" id="fig|64091.14.peg.1301"/>
<dbReference type="HOGENOM" id="CLU_061015_3_0_2"/>
<dbReference type="InParanoid" id="P50558"/>
<dbReference type="OrthoDB" id="372044at2157"/>
<dbReference type="PhylomeDB" id="P50558"/>
<dbReference type="Proteomes" id="UP000000554">
    <property type="component" value="Chromosome"/>
</dbReference>
<dbReference type="GO" id="GO:0022625">
    <property type="term" value="C:cytosolic large ribosomal subunit"/>
    <property type="evidence" value="ECO:0000318"/>
    <property type="project" value="GO_Central"/>
</dbReference>
<dbReference type="GO" id="GO:0003723">
    <property type="term" value="F:RNA binding"/>
    <property type="evidence" value="ECO:0000318"/>
    <property type="project" value="GO_Central"/>
</dbReference>
<dbReference type="GO" id="GO:0019843">
    <property type="term" value="F:rRNA binding"/>
    <property type="evidence" value="ECO:0007669"/>
    <property type="project" value="UniProtKB-UniRule"/>
</dbReference>
<dbReference type="GO" id="GO:0003735">
    <property type="term" value="F:structural constituent of ribosome"/>
    <property type="evidence" value="ECO:0000318"/>
    <property type="project" value="GO_Central"/>
</dbReference>
<dbReference type="GO" id="GO:0000049">
    <property type="term" value="F:tRNA binding"/>
    <property type="evidence" value="ECO:0007669"/>
    <property type="project" value="UniProtKB-UniRule"/>
</dbReference>
<dbReference type="GO" id="GO:0006412">
    <property type="term" value="P:translation"/>
    <property type="evidence" value="ECO:0000318"/>
    <property type="project" value="GO_Central"/>
</dbReference>
<dbReference type="FunFam" id="3.30.1440.10:FF:000002">
    <property type="entry name" value="60S ribosomal protein L11"/>
    <property type="match status" value="1"/>
</dbReference>
<dbReference type="Gene3D" id="3.30.1440.10">
    <property type="match status" value="1"/>
</dbReference>
<dbReference type="HAMAP" id="MF_01333_A">
    <property type="entry name" value="Ribosomal_uL5_A"/>
    <property type="match status" value="1"/>
</dbReference>
<dbReference type="InterPro" id="IPR002132">
    <property type="entry name" value="Ribosomal_uL5"/>
</dbReference>
<dbReference type="InterPro" id="IPR022804">
    <property type="entry name" value="Ribosomal_uL5_arc"/>
</dbReference>
<dbReference type="InterPro" id="IPR031309">
    <property type="entry name" value="Ribosomal_uL5_C"/>
</dbReference>
<dbReference type="InterPro" id="IPR022803">
    <property type="entry name" value="Ribosomal_uL5_dom_sf"/>
</dbReference>
<dbReference type="InterPro" id="IPR031310">
    <property type="entry name" value="Ribosomal_uL5_N"/>
</dbReference>
<dbReference type="NCBIfam" id="NF003258">
    <property type="entry name" value="PRK04219.1"/>
    <property type="match status" value="1"/>
</dbReference>
<dbReference type="PANTHER" id="PTHR11994">
    <property type="entry name" value="60S RIBOSOMAL PROTEIN L11-RELATED"/>
    <property type="match status" value="1"/>
</dbReference>
<dbReference type="Pfam" id="PF00281">
    <property type="entry name" value="Ribosomal_L5"/>
    <property type="match status" value="1"/>
</dbReference>
<dbReference type="Pfam" id="PF00673">
    <property type="entry name" value="Ribosomal_L5_C"/>
    <property type="match status" value="1"/>
</dbReference>
<dbReference type="PIRSF" id="PIRSF002161">
    <property type="entry name" value="Ribosomal_L5"/>
    <property type="match status" value="1"/>
</dbReference>
<dbReference type="SUPFAM" id="SSF55282">
    <property type="entry name" value="RL5-like"/>
    <property type="match status" value="1"/>
</dbReference>
<proteinExistence type="evidence at protein level"/>
<reference key="1">
    <citation type="journal article" date="2000" name="Proc. Natl. Acad. Sci. U.S.A.">
        <title>Genome sequence of Halobacterium species NRC-1.</title>
        <authorList>
            <person name="Ng W.V."/>
            <person name="Kennedy S.P."/>
            <person name="Mahairas G.G."/>
            <person name="Berquist B."/>
            <person name="Pan M."/>
            <person name="Shukla H.D."/>
            <person name="Lasky S.R."/>
            <person name="Baliga N.S."/>
            <person name="Thorsson V."/>
            <person name="Sbrogna J."/>
            <person name="Swartzell S."/>
            <person name="Weir D."/>
            <person name="Hall J."/>
            <person name="Dahl T.A."/>
            <person name="Welti R."/>
            <person name="Goo Y.A."/>
            <person name="Leithauser B."/>
            <person name="Keller K."/>
            <person name="Cruz R."/>
            <person name="Danson M.J."/>
            <person name="Hough D.W."/>
            <person name="Maddocks D.G."/>
            <person name="Jablonski P.E."/>
            <person name="Krebs M.P."/>
            <person name="Angevine C.M."/>
            <person name="Dale H."/>
            <person name="Isenbarger T.A."/>
            <person name="Peck R.F."/>
            <person name="Pohlschroder M."/>
            <person name="Spudich J.L."/>
            <person name="Jung K.-H."/>
            <person name="Alam M."/>
            <person name="Freitas T."/>
            <person name="Hou S."/>
            <person name="Daniels C.J."/>
            <person name="Dennis P.P."/>
            <person name="Omer A.D."/>
            <person name="Ebhardt H."/>
            <person name="Lowe T.M."/>
            <person name="Liang P."/>
            <person name="Riley M."/>
            <person name="Hood L."/>
            <person name="DasSarma S."/>
        </authorList>
    </citation>
    <scope>NUCLEOTIDE SEQUENCE [LARGE SCALE GENOMIC DNA]</scope>
    <source>
        <strain>ATCC 700922 / JCM 11081 / NRC-1</strain>
    </source>
</reference>
<reference key="2">
    <citation type="journal article" date="1978" name="Eur. J. Biochem.">
        <title>The 5-S RNA-protein complex from an extreme halophile, Halobacterium cutirubrum. Purification and characterization.</title>
        <authorList>
            <person name="Smith N."/>
            <person name="Matheson A.T."/>
            <person name="Yaguchi M."/>
            <person name="Willick G."/>
            <person name="Nazar R.N."/>
        </authorList>
    </citation>
    <scope>PROTEIN SEQUENCE OF 2-29</scope>
</reference>
<reference key="3">
    <citation type="journal article" date="1994" name="Eur. J. Biochem.">
        <title>Comparative analysis of the protein components from 5S rRNA.protein complexes of halophilic archaebacteria.</title>
        <authorList>
            <person name="McDougall J."/>
            <person name="Wittmann-Liebold B."/>
        </authorList>
    </citation>
    <scope>PROTEIN SEQUENCE OF 2-24</scope>
    <source>
        <strain>ATCC 33171 / DSM 3754 / JCM 8978 / NCIMB 764 / NRC 34002</strain>
        <strain>DSM 670</strain>
    </source>
</reference>
<organism>
    <name type="scientific">Halobacterium salinarum (strain ATCC 700922 / JCM 11081 / NRC-1)</name>
    <name type="common">Halobacterium halobium</name>
    <dbReference type="NCBI Taxonomy" id="64091"/>
    <lineage>
        <taxon>Archaea</taxon>
        <taxon>Methanobacteriati</taxon>
        <taxon>Methanobacteriota</taxon>
        <taxon>Stenosarchaea group</taxon>
        <taxon>Halobacteria</taxon>
        <taxon>Halobacteriales</taxon>
        <taxon>Halobacteriaceae</taxon>
        <taxon>Halobacterium</taxon>
        <taxon>Halobacterium salinarum NRC-34001</taxon>
    </lineage>
</organism>
<accession>P50558</accession>
<accession>P05972</accession>
<accession>P50556</accession>
<accession>Q9HPC1</accession>
<gene>
    <name evidence="1" type="primary">rpl5</name>
    <name type="ordered locus">VNG_1705G</name>
</gene>
<feature type="initiator methionine" description="Removed" evidence="2 3">
    <location>
        <position position="1"/>
    </location>
</feature>
<feature type="chain" id="PRO_0000125053" description="Large ribosomal subunit protein uL5">
    <location>
        <begin position="2"/>
        <end position="175"/>
    </location>
</feature>
<evidence type="ECO:0000255" key="1">
    <source>
        <dbReference type="HAMAP-Rule" id="MF_01333"/>
    </source>
</evidence>
<evidence type="ECO:0000269" key="2">
    <source>
    </source>
</evidence>
<evidence type="ECO:0000269" key="3">
    <source>
    </source>
</evidence>
<evidence type="ECO:0000305" key="4"/>
<sequence>MSETDSTDFHEMREPRIEKVVVHMGVGQGGVELQNAETILEAITGQQTVRTKAKSPEPEFGLRQGDPIGAKVTLRDDTAVDFLERALPAADLDRRQFDNTGNVSFGIEEHTDFPSQEYDPNIGIYGMDVTVNLTRPGYRVAKRDQGTRQIPSNHRLNSEDAVSFLVSNFDVEVNE</sequence>
<protein>
    <recommendedName>
        <fullName evidence="1">Large ribosomal subunit protein uL5</fullName>
    </recommendedName>
    <alternativeName>
        <fullName evidence="4">50S ribosomal protein L5</fullName>
    </alternativeName>
    <alternativeName>
        <fullName>HCul5</fullName>
    </alternativeName>
    <alternativeName>
        <fullName>HHal5</fullName>
    </alternativeName>
    <alternativeName>
        <fullName>HL19</fullName>
    </alternativeName>
    <alternativeName>
        <fullName>HSal5</fullName>
    </alternativeName>
</protein>
<comment type="function">
    <text evidence="1">This is one of the proteins that bind and probably mediate the attachment of the 5S RNA into the large ribosomal subunit, where it forms part of the central protuberance. In the 70S ribosome it contacts protein S13 of the 30S subunit (bridge B1b), connecting the 2 subunits; this bridge is implicated in subunit movement. May contact the P site tRNA; the 5S rRNA and some of its associated proteins might help stabilize positioning of ribosome-bound tRNAs.</text>
</comment>
<comment type="subunit">
    <text evidence="1">Part of the 50S ribosomal subunit; contacts the 5S rRNA and probably tRNA. Forms a bridge to the 30S subunit in the 70S ribosome.</text>
</comment>
<comment type="similarity">
    <text evidence="1">Belongs to the universal ribosomal protein uL5 family.</text>
</comment>
<keyword id="KW-0903">Direct protein sequencing</keyword>
<keyword id="KW-1185">Reference proteome</keyword>
<keyword id="KW-0687">Ribonucleoprotein</keyword>
<keyword id="KW-0689">Ribosomal protein</keyword>
<keyword id="KW-0694">RNA-binding</keyword>
<keyword id="KW-0699">rRNA-binding</keyword>
<keyword id="KW-0820">tRNA-binding</keyword>
<name>RL5_HALSA</name>